<name>GLMM_LATSS</name>
<gene>
    <name evidence="1" type="primary">glmM</name>
    <name type="ordered locus">LCA_1357</name>
</gene>
<protein>
    <recommendedName>
        <fullName evidence="1">Phosphoglucosamine mutase</fullName>
        <ecNumber evidence="1">5.4.2.10</ecNumber>
    </recommendedName>
</protein>
<accession>Q38VX2</accession>
<feature type="chain" id="PRO_0000305646" description="Phosphoglucosamine mutase">
    <location>
        <begin position="1"/>
        <end position="450"/>
    </location>
</feature>
<feature type="active site" description="Phosphoserine intermediate" evidence="1">
    <location>
        <position position="103"/>
    </location>
</feature>
<feature type="binding site" description="via phosphate group" evidence="1">
    <location>
        <position position="103"/>
    </location>
    <ligand>
        <name>Mg(2+)</name>
        <dbReference type="ChEBI" id="CHEBI:18420"/>
    </ligand>
</feature>
<feature type="binding site" evidence="1">
    <location>
        <position position="243"/>
    </location>
    <ligand>
        <name>Mg(2+)</name>
        <dbReference type="ChEBI" id="CHEBI:18420"/>
    </ligand>
</feature>
<feature type="binding site" evidence="1">
    <location>
        <position position="245"/>
    </location>
    <ligand>
        <name>Mg(2+)</name>
        <dbReference type="ChEBI" id="CHEBI:18420"/>
    </ligand>
</feature>
<feature type="binding site" evidence="1">
    <location>
        <position position="247"/>
    </location>
    <ligand>
        <name>Mg(2+)</name>
        <dbReference type="ChEBI" id="CHEBI:18420"/>
    </ligand>
</feature>
<feature type="modified residue" description="Phosphoserine" evidence="1">
    <location>
        <position position="103"/>
    </location>
</feature>
<reference key="1">
    <citation type="journal article" date="2005" name="Nat. Biotechnol.">
        <title>The complete genome sequence of the meat-borne lactic acid bacterium Lactobacillus sakei 23K.</title>
        <authorList>
            <person name="Chaillou S."/>
            <person name="Champomier-Verges M.-C."/>
            <person name="Cornet M."/>
            <person name="Crutz-Le Coq A.-M."/>
            <person name="Dudez A.-M."/>
            <person name="Martin V."/>
            <person name="Beaufils S."/>
            <person name="Darbon-Rongere E."/>
            <person name="Bossy R."/>
            <person name="Loux V."/>
            <person name="Zagorec M."/>
        </authorList>
    </citation>
    <scope>NUCLEOTIDE SEQUENCE [LARGE SCALE GENOMIC DNA]</scope>
    <source>
        <strain>23K</strain>
    </source>
</reference>
<keyword id="KW-0413">Isomerase</keyword>
<keyword id="KW-0460">Magnesium</keyword>
<keyword id="KW-0479">Metal-binding</keyword>
<keyword id="KW-0597">Phosphoprotein</keyword>
<keyword id="KW-1185">Reference proteome</keyword>
<comment type="function">
    <text evidence="1">Catalyzes the conversion of glucosamine-6-phosphate to glucosamine-1-phosphate.</text>
</comment>
<comment type="catalytic activity">
    <reaction evidence="1">
        <text>alpha-D-glucosamine 1-phosphate = D-glucosamine 6-phosphate</text>
        <dbReference type="Rhea" id="RHEA:23424"/>
        <dbReference type="ChEBI" id="CHEBI:58516"/>
        <dbReference type="ChEBI" id="CHEBI:58725"/>
        <dbReference type="EC" id="5.4.2.10"/>
    </reaction>
</comment>
<comment type="cofactor">
    <cofactor evidence="1">
        <name>Mg(2+)</name>
        <dbReference type="ChEBI" id="CHEBI:18420"/>
    </cofactor>
    <text evidence="1">Binds 1 Mg(2+) ion per subunit.</text>
</comment>
<comment type="PTM">
    <text evidence="1">Activated by phosphorylation.</text>
</comment>
<comment type="similarity">
    <text evidence="1">Belongs to the phosphohexose mutase family.</text>
</comment>
<dbReference type="EC" id="5.4.2.10" evidence="1"/>
<dbReference type="EMBL" id="CR936503">
    <property type="protein sequence ID" value="CAI55661.1"/>
    <property type="molecule type" value="Genomic_DNA"/>
</dbReference>
<dbReference type="RefSeq" id="WP_011375052.1">
    <property type="nucleotide sequence ID" value="NC_007576.1"/>
</dbReference>
<dbReference type="SMR" id="Q38VX2"/>
<dbReference type="STRING" id="314315.LCA_1357"/>
<dbReference type="KEGG" id="lsa:LCA_1357"/>
<dbReference type="eggNOG" id="COG1109">
    <property type="taxonomic scope" value="Bacteria"/>
</dbReference>
<dbReference type="HOGENOM" id="CLU_016950_7_0_9"/>
<dbReference type="OrthoDB" id="9806956at2"/>
<dbReference type="Proteomes" id="UP000002707">
    <property type="component" value="Chromosome"/>
</dbReference>
<dbReference type="GO" id="GO:0005829">
    <property type="term" value="C:cytosol"/>
    <property type="evidence" value="ECO:0007669"/>
    <property type="project" value="TreeGrafter"/>
</dbReference>
<dbReference type="GO" id="GO:0000287">
    <property type="term" value="F:magnesium ion binding"/>
    <property type="evidence" value="ECO:0007669"/>
    <property type="project" value="UniProtKB-UniRule"/>
</dbReference>
<dbReference type="GO" id="GO:0008966">
    <property type="term" value="F:phosphoglucosamine mutase activity"/>
    <property type="evidence" value="ECO:0007669"/>
    <property type="project" value="UniProtKB-UniRule"/>
</dbReference>
<dbReference type="GO" id="GO:0004615">
    <property type="term" value="F:phosphomannomutase activity"/>
    <property type="evidence" value="ECO:0007669"/>
    <property type="project" value="TreeGrafter"/>
</dbReference>
<dbReference type="GO" id="GO:0005975">
    <property type="term" value="P:carbohydrate metabolic process"/>
    <property type="evidence" value="ECO:0007669"/>
    <property type="project" value="InterPro"/>
</dbReference>
<dbReference type="GO" id="GO:0009252">
    <property type="term" value="P:peptidoglycan biosynthetic process"/>
    <property type="evidence" value="ECO:0007669"/>
    <property type="project" value="TreeGrafter"/>
</dbReference>
<dbReference type="GO" id="GO:0006048">
    <property type="term" value="P:UDP-N-acetylglucosamine biosynthetic process"/>
    <property type="evidence" value="ECO:0007669"/>
    <property type="project" value="TreeGrafter"/>
</dbReference>
<dbReference type="CDD" id="cd05802">
    <property type="entry name" value="GlmM"/>
    <property type="match status" value="1"/>
</dbReference>
<dbReference type="FunFam" id="3.30.310.50:FF:000001">
    <property type="entry name" value="Phosphoglucosamine mutase"/>
    <property type="match status" value="1"/>
</dbReference>
<dbReference type="FunFam" id="3.40.120.10:FF:000001">
    <property type="entry name" value="Phosphoglucosamine mutase"/>
    <property type="match status" value="1"/>
</dbReference>
<dbReference type="FunFam" id="3.40.120.10:FF:000002">
    <property type="entry name" value="Phosphoglucosamine mutase"/>
    <property type="match status" value="1"/>
</dbReference>
<dbReference type="Gene3D" id="3.40.120.10">
    <property type="entry name" value="Alpha-D-Glucose-1,6-Bisphosphate, subunit A, domain 3"/>
    <property type="match status" value="3"/>
</dbReference>
<dbReference type="Gene3D" id="3.30.310.50">
    <property type="entry name" value="Alpha-D-phosphohexomutase, C-terminal domain"/>
    <property type="match status" value="1"/>
</dbReference>
<dbReference type="HAMAP" id="MF_01554_B">
    <property type="entry name" value="GlmM_B"/>
    <property type="match status" value="1"/>
</dbReference>
<dbReference type="InterPro" id="IPR005844">
    <property type="entry name" value="A-D-PHexomutase_a/b/a-I"/>
</dbReference>
<dbReference type="InterPro" id="IPR016055">
    <property type="entry name" value="A-D-PHexomutase_a/b/a-I/II/III"/>
</dbReference>
<dbReference type="InterPro" id="IPR005845">
    <property type="entry name" value="A-D-PHexomutase_a/b/a-II"/>
</dbReference>
<dbReference type="InterPro" id="IPR005846">
    <property type="entry name" value="A-D-PHexomutase_a/b/a-III"/>
</dbReference>
<dbReference type="InterPro" id="IPR005843">
    <property type="entry name" value="A-D-PHexomutase_C"/>
</dbReference>
<dbReference type="InterPro" id="IPR036900">
    <property type="entry name" value="A-D-PHexomutase_C_sf"/>
</dbReference>
<dbReference type="InterPro" id="IPR016066">
    <property type="entry name" value="A-D-PHexomutase_CS"/>
</dbReference>
<dbReference type="InterPro" id="IPR005841">
    <property type="entry name" value="Alpha-D-phosphohexomutase_SF"/>
</dbReference>
<dbReference type="InterPro" id="IPR018247">
    <property type="entry name" value="EF_Hand_1_Ca_BS"/>
</dbReference>
<dbReference type="InterPro" id="IPR006352">
    <property type="entry name" value="GlmM_bact"/>
</dbReference>
<dbReference type="InterPro" id="IPR050060">
    <property type="entry name" value="Phosphoglucosamine_mutase"/>
</dbReference>
<dbReference type="NCBIfam" id="TIGR01455">
    <property type="entry name" value="glmM"/>
    <property type="match status" value="1"/>
</dbReference>
<dbReference type="NCBIfam" id="NF008139">
    <property type="entry name" value="PRK10887.1"/>
    <property type="match status" value="1"/>
</dbReference>
<dbReference type="PANTHER" id="PTHR42946:SF1">
    <property type="entry name" value="PHOSPHOGLUCOMUTASE (ALPHA-D-GLUCOSE-1,6-BISPHOSPHATE-DEPENDENT)"/>
    <property type="match status" value="1"/>
</dbReference>
<dbReference type="PANTHER" id="PTHR42946">
    <property type="entry name" value="PHOSPHOHEXOSE MUTASE"/>
    <property type="match status" value="1"/>
</dbReference>
<dbReference type="Pfam" id="PF02878">
    <property type="entry name" value="PGM_PMM_I"/>
    <property type="match status" value="1"/>
</dbReference>
<dbReference type="Pfam" id="PF02879">
    <property type="entry name" value="PGM_PMM_II"/>
    <property type="match status" value="1"/>
</dbReference>
<dbReference type="Pfam" id="PF02880">
    <property type="entry name" value="PGM_PMM_III"/>
    <property type="match status" value="1"/>
</dbReference>
<dbReference type="Pfam" id="PF00408">
    <property type="entry name" value="PGM_PMM_IV"/>
    <property type="match status" value="1"/>
</dbReference>
<dbReference type="PRINTS" id="PR00509">
    <property type="entry name" value="PGMPMM"/>
</dbReference>
<dbReference type="SUPFAM" id="SSF55957">
    <property type="entry name" value="Phosphoglucomutase, C-terminal domain"/>
    <property type="match status" value="1"/>
</dbReference>
<dbReference type="SUPFAM" id="SSF53738">
    <property type="entry name" value="Phosphoglucomutase, first 3 domains"/>
    <property type="match status" value="3"/>
</dbReference>
<dbReference type="PROSITE" id="PS00710">
    <property type="entry name" value="PGM_PMM"/>
    <property type="match status" value="1"/>
</dbReference>
<proteinExistence type="inferred from homology"/>
<sequence>MTKYFGTDGVRGVANLELSPEMAFKLGRAGGYVLTKHADKNQRPKVLVARDTRISGQMLEQSLISGLLSVGIEVLSLGVITTPAVAYLIKVQEASAGIMISASHNPAIYNGIKFFGADGYKLPDATEEEIEAILDAPEDILPRPEGEGLGTVEEYPEGALKYTQFLEHTIPDDLEGLKVAVDGANGSTSGLISRVFADLETDFTTTATHPNGLNINDGVGSTHPENLVKKVLESGADMGLAFDGDGDRCIAVDELGNIIDGDKIMFILGHYLSEKGRLKQDTIVTTVMSNIGLYKAIEANGMKSAQTDVGDRHVVEEMREKGFNLGGEQSGHIIIFDYHNTGDGMLTGIQLMNVMKQTGKKLSELAAPVQTYPQKLVNLTVKDKDAWLTNDKIQAAIDTVEKEMNGDGRVLVRPSGTEPLLRVMCEAATEEKVNQYADQIAAVVQSEIGE</sequence>
<organism>
    <name type="scientific">Latilactobacillus sakei subsp. sakei (strain 23K)</name>
    <name type="common">Lactobacillus sakei subsp. sakei</name>
    <dbReference type="NCBI Taxonomy" id="314315"/>
    <lineage>
        <taxon>Bacteria</taxon>
        <taxon>Bacillati</taxon>
        <taxon>Bacillota</taxon>
        <taxon>Bacilli</taxon>
        <taxon>Lactobacillales</taxon>
        <taxon>Lactobacillaceae</taxon>
        <taxon>Latilactobacillus</taxon>
    </lineage>
</organism>
<evidence type="ECO:0000255" key="1">
    <source>
        <dbReference type="HAMAP-Rule" id="MF_01554"/>
    </source>
</evidence>